<feature type="chain" id="PRO_1000165147" description="Shikimate kinase 2">
    <location>
        <begin position="1"/>
        <end position="181"/>
    </location>
</feature>
<feature type="region of interest" description="LID domain">
    <location>
        <begin position="112"/>
        <end position="126"/>
    </location>
</feature>
<feature type="binding site" evidence="1">
    <location>
        <begin position="12"/>
        <end position="17"/>
    </location>
    <ligand>
        <name>ATP</name>
        <dbReference type="ChEBI" id="CHEBI:30616"/>
    </ligand>
</feature>
<feature type="binding site" evidence="1">
    <location>
        <position position="16"/>
    </location>
    <ligand>
        <name>Mg(2+)</name>
        <dbReference type="ChEBI" id="CHEBI:18420"/>
    </ligand>
</feature>
<feature type="binding site" evidence="1">
    <location>
        <position position="32"/>
    </location>
    <ligand>
        <name>Mg(2+)</name>
        <dbReference type="ChEBI" id="CHEBI:18420"/>
    </ligand>
</feature>
<feature type="binding site" evidence="1">
    <location>
        <position position="34"/>
    </location>
    <ligand>
        <name>substrate</name>
    </ligand>
</feature>
<feature type="binding site" evidence="1">
    <location>
        <position position="58"/>
    </location>
    <ligand>
        <name>substrate</name>
    </ligand>
</feature>
<feature type="binding site" evidence="1">
    <location>
        <position position="79"/>
    </location>
    <ligand>
        <name>substrate</name>
    </ligand>
</feature>
<feature type="binding site" evidence="1">
    <location>
        <position position="120"/>
    </location>
    <ligand>
        <name>ATP</name>
        <dbReference type="ChEBI" id="CHEBI:30616"/>
    </ligand>
</feature>
<feature type="binding site" evidence="1">
    <location>
        <position position="139"/>
    </location>
    <ligand>
        <name>substrate</name>
    </ligand>
</feature>
<dbReference type="EC" id="2.7.1.71" evidence="1"/>
<dbReference type="EMBL" id="CP000857">
    <property type="protein sequence ID" value="ACN44581.1"/>
    <property type="molecule type" value="Genomic_DNA"/>
</dbReference>
<dbReference type="RefSeq" id="WP_000983565.1">
    <property type="nucleotide sequence ID" value="NC_012125.1"/>
</dbReference>
<dbReference type="SMR" id="C0Q7R1"/>
<dbReference type="KEGG" id="sei:SPC_0398"/>
<dbReference type="HOGENOM" id="CLU_057607_4_3_6"/>
<dbReference type="UniPathway" id="UPA00053">
    <property type="reaction ID" value="UER00088"/>
</dbReference>
<dbReference type="Proteomes" id="UP000001599">
    <property type="component" value="Chromosome"/>
</dbReference>
<dbReference type="GO" id="GO:0005829">
    <property type="term" value="C:cytosol"/>
    <property type="evidence" value="ECO:0007669"/>
    <property type="project" value="TreeGrafter"/>
</dbReference>
<dbReference type="GO" id="GO:0005524">
    <property type="term" value="F:ATP binding"/>
    <property type="evidence" value="ECO:0007669"/>
    <property type="project" value="UniProtKB-UniRule"/>
</dbReference>
<dbReference type="GO" id="GO:0000287">
    <property type="term" value="F:magnesium ion binding"/>
    <property type="evidence" value="ECO:0007669"/>
    <property type="project" value="UniProtKB-UniRule"/>
</dbReference>
<dbReference type="GO" id="GO:0004765">
    <property type="term" value="F:shikimate kinase activity"/>
    <property type="evidence" value="ECO:0007669"/>
    <property type="project" value="UniProtKB-UniRule"/>
</dbReference>
<dbReference type="GO" id="GO:0008652">
    <property type="term" value="P:amino acid biosynthetic process"/>
    <property type="evidence" value="ECO:0007669"/>
    <property type="project" value="UniProtKB-KW"/>
</dbReference>
<dbReference type="GO" id="GO:0009073">
    <property type="term" value="P:aromatic amino acid family biosynthetic process"/>
    <property type="evidence" value="ECO:0007669"/>
    <property type="project" value="UniProtKB-KW"/>
</dbReference>
<dbReference type="GO" id="GO:0009423">
    <property type="term" value="P:chorismate biosynthetic process"/>
    <property type="evidence" value="ECO:0007669"/>
    <property type="project" value="UniProtKB-UniRule"/>
</dbReference>
<dbReference type="CDD" id="cd00464">
    <property type="entry name" value="SK"/>
    <property type="match status" value="1"/>
</dbReference>
<dbReference type="FunFam" id="3.40.50.300:FF:000408">
    <property type="entry name" value="Shikimate kinase 2"/>
    <property type="match status" value="1"/>
</dbReference>
<dbReference type="Gene3D" id="3.40.50.300">
    <property type="entry name" value="P-loop containing nucleotide triphosphate hydrolases"/>
    <property type="match status" value="1"/>
</dbReference>
<dbReference type="HAMAP" id="MF_00109">
    <property type="entry name" value="Shikimate_kinase"/>
    <property type="match status" value="1"/>
</dbReference>
<dbReference type="HAMAP" id="MF_01269">
    <property type="entry name" value="Shikimate_kinase_2"/>
    <property type="match status" value="1"/>
</dbReference>
<dbReference type="InterPro" id="IPR027417">
    <property type="entry name" value="P-loop_NTPase"/>
</dbReference>
<dbReference type="InterPro" id="IPR031322">
    <property type="entry name" value="Shikimate/glucono_kinase"/>
</dbReference>
<dbReference type="InterPro" id="IPR000623">
    <property type="entry name" value="Shikimate_kinase/TSH1"/>
</dbReference>
<dbReference type="InterPro" id="IPR027544">
    <property type="entry name" value="Shikimate_kinase_2"/>
</dbReference>
<dbReference type="InterPro" id="IPR023000">
    <property type="entry name" value="Shikimate_kinase_CS"/>
</dbReference>
<dbReference type="NCBIfam" id="NF002988">
    <property type="entry name" value="PRK03731.1"/>
    <property type="match status" value="1"/>
</dbReference>
<dbReference type="PANTHER" id="PTHR21087">
    <property type="entry name" value="SHIKIMATE KINASE"/>
    <property type="match status" value="1"/>
</dbReference>
<dbReference type="PANTHER" id="PTHR21087:SF21">
    <property type="entry name" value="SHIKIMATE KINASE 2"/>
    <property type="match status" value="1"/>
</dbReference>
<dbReference type="Pfam" id="PF01202">
    <property type="entry name" value="SKI"/>
    <property type="match status" value="1"/>
</dbReference>
<dbReference type="PRINTS" id="PR01100">
    <property type="entry name" value="SHIKIMTKNASE"/>
</dbReference>
<dbReference type="SUPFAM" id="SSF52540">
    <property type="entry name" value="P-loop containing nucleoside triphosphate hydrolases"/>
    <property type="match status" value="1"/>
</dbReference>
<dbReference type="PROSITE" id="PS01128">
    <property type="entry name" value="SHIKIMATE_KINASE"/>
    <property type="match status" value="1"/>
</dbReference>
<gene>
    <name evidence="1" type="primary">aroL</name>
    <name type="ordered locus">SPC_0398</name>
</gene>
<sequence>MMQPLYLVGPRGCGKTTIGMALAQATGFRFADTDRWLQSHVQMSVADIVEKEGWGGFRARETAALEAVSAPSTVVATGGGIILTDYNRRYMHRVGVVIYLCAPVSTLVNRLEAEPEADLRPTLTGKPLSEEVREVLEQRDALYRETAHYIIDATKAPAQVVSEIIAALPPSTQRLQGDVYT</sequence>
<organism>
    <name type="scientific">Salmonella paratyphi C (strain RKS4594)</name>
    <dbReference type="NCBI Taxonomy" id="476213"/>
    <lineage>
        <taxon>Bacteria</taxon>
        <taxon>Pseudomonadati</taxon>
        <taxon>Pseudomonadota</taxon>
        <taxon>Gammaproteobacteria</taxon>
        <taxon>Enterobacterales</taxon>
        <taxon>Enterobacteriaceae</taxon>
        <taxon>Salmonella</taxon>
    </lineage>
</organism>
<keyword id="KW-0028">Amino-acid biosynthesis</keyword>
<keyword id="KW-0057">Aromatic amino acid biosynthesis</keyword>
<keyword id="KW-0067">ATP-binding</keyword>
<keyword id="KW-0963">Cytoplasm</keyword>
<keyword id="KW-0418">Kinase</keyword>
<keyword id="KW-0460">Magnesium</keyword>
<keyword id="KW-0479">Metal-binding</keyword>
<keyword id="KW-0547">Nucleotide-binding</keyword>
<keyword id="KW-0808">Transferase</keyword>
<accession>C0Q7R1</accession>
<name>AROL_SALPC</name>
<proteinExistence type="inferred from homology"/>
<evidence type="ECO:0000255" key="1">
    <source>
        <dbReference type="HAMAP-Rule" id="MF_01269"/>
    </source>
</evidence>
<protein>
    <recommendedName>
        <fullName evidence="1">Shikimate kinase 2</fullName>
        <shortName evidence="1">SK 2</shortName>
        <ecNumber evidence="1">2.7.1.71</ecNumber>
    </recommendedName>
</protein>
<comment type="function">
    <text evidence="1">Catalyzes the specific phosphorylation of the 3-hydroxyl group of shikimic acid using ATP as a cosubstrate.</text>
</comment>
<comment type="catalytic activity">
    <reaction evidence="1">
        <text>shikimate + ATP = 3-phosphoshikimate + ADP + H(+)</text>
        <dbReference type="Rhea" id="RHEA:13121"/>
        <dbReference type="ChEBI" id="CHEBI:15378"/>
        <dbReference type="ChEBI" id="CHEBI:30616"/>
        <dbReference type="ChEBI" id="CHEBI:36208"/>
        <dbReference type="ChEBI" id="CHEBI:145989"/>
        <dbReference type="ChEBI" id="CHEBI:456216"/>
        <dbReference type="EC" id="2.7.1.71"/>
    </reaction>
</comment>
<comment type="cofactor">
    <cofactor evidence="1">
        <name>Mg(2+)</name>
        <dbReference type="ChEBI" id="CHEBI:18420"/>
    </cofactor>
    <text evidence="1">Binds 1 Mg(2+) ion per subunit.</text>
</comment>
<comment type="pathway">
    <text evidence="1">Metabolic intermediate biosynthesis; chorismate biosynthesis; chorismate from D-erythrose 4-phosphate and phosphoenolpyruvate: step 5/7.</text>
</comment>
<comment type="subunit">
    <text evidence="1">Monomer.</text>
</comment>
<comment type="subcellular location">
    <subcellularLocation>
        <location evidence="1">Cytoplasm</location>
    </subcellularLocation>
</comment>
<comment type="domain">
    <text evidence="1">The LID domain closes over the active site upon ATP binding.</text>
</comment>
<comment type="similarity">
    <text evidence="1">Belongs to the shikimate kinase family. AroL subfamily.</text>
</comment>
<reference key="1">
    <citation type="journal article" date="2009" name="PLoS ONE">
        <title>Salmonella paratyphi C: genetic divergence from Salmonella choleraesuis and pathogenic convergence with Salmonella typhi.</title>
        <authorList>
            <person name="Liu W.-Q."/>
            <person name="Feng Y."/>
            <person name="Wang Y."/>
            <person name="Zou Q.-H."/>
            <person name="Chen F."/>
            <person name="Guo J.-T."/>
            <person name="Peng Y.-H."/>
            <person name="Jin Y."/>
            <person name="Li Y.-G."/>
            <person name="Hu S.-N."/>
            <person name="Johnston R.N."/>
            <person name="Liu G.-R."/>
            <person name="Liu S.-L."/>
        </authorList>
    </citation>
    <scope>NUCLEOTIDE SEQUENCE [LARGE SCALE GENOMIC DNA]</scope>
    <source>
        <strain>RKS4594</strain>
    </source>
</reference>